<protein>
    <recommendedName>
        <fullName evidence="1">Flagellar P-ring protein</fullName>
    </recommendedName>
    <alternativeName>
        <fullName evidence="1">Basal body P-ring protein</fullName>
    </alternativeName>
</protein>
<proteinExistence type="inferred from homology"/>
<keyword id="KW-0975">Bacterial flagellum</keyword>
<keyword id="KW-0574">Periplasm</keyword>
<keyword id="KW-0732">Signal</keyword>
<reference key="1">
    <citation type="journal article" date="2003" name="Nat. Genet.">
        <title>Comparative analysis of the genome sequences of Bordetella pertussis, Bordetella parapertussis and Bordetella bronchiseptica.</title>
        <authorList>
            <person name="Parkhill J."/>
            <person name="Sebaihia M."/>
            <person name="Preston A."/>
            <person name="Murphy L.D."/>
            <person name="Thomson N.R."/>
            <person name="Harris D.E."/>
            <person name="Holden M.T.G."/>
            <person name="Churcher C.M."/>
            <person name="Bentley S.D."/>
            <person name="Mungall K.L."/>
            <person name="Cerdeno-Tarraga A.-M."/>
            <person name="Temple L."/>
            <person name="James K.D."/>
            <person name="Harris B."/>
            <person name="Quail M.A."/>
            <person name="Achtman M."/>
            <person name="Atkin R."/>
            <person name="Baker S."/>
            <person name="Basham D."/>
            <person name="Bason N."/>
            <person name="Cherevach I."/>
            <person name="Chillingworth T."/>
            <person name="Collins M."/>
            <person name="Cronin A."/>
            <person name="Davis P."/>
            <person name="Doggett J."/>
            <person name="Feltwell T."/>
            <person name="Goble A."/>
            <person name="Hamlin N."/>
            <person name="Hauser H."/>
            <person name="Holroyd S."/>
            <person name="Jagels K."/>
            <person name="Leather S."/>
            <person name="Moule S."/>
            <person name="Norberczak H."/>
            <person name="O'Neil S."/>
            <person name="Ormond D."/>
            <person name="Price C."/>
            <person name="Rabbinowitsch E."/>
            <person name="Rutter S."/>
            <person name="Sanders M."/>
            <person name="Saunders D."/>
            <person name="Seeger K."/>
            <person name="Sharp S."/>
            <person name="Simmonds M."/>
            <person name="Skelton J."/>
            <person name="Squares R."/>
            <person name="Squares S."/>
            <person name="Stevens K."/>
            <person name="Unwin L."/>
            <person name="Whitehead S."/>
            <person name="Barrell B.G."/>
            <person name="Maskell D.J."/>
        </authorList>
    </citation>
    <scope>NUCLEOTIDE SEQUENCE [LARGE SCALE GENOMIC DNA]</scope>
    <source>
        <strain>ATCC BAA-588 / NCTC 13252 / RB50</strain>
    </source>
</reference>
<sequence length="368" mass="38145">MLIPLARAVLALALLGAGAAHAERLKDLASIQGVRGNQLIGYGLVVGLDGSGDQVRQTPFTQQSLTNMLSQLGITVPQGSNMQLKNVAAVMVTATLPSFARPGQTVDVVVSSMGNAKSLRGGTLLMTPLKGADNQVYAIAQGNLLVGGAGASAGGSSVQINQLNGGRISNGAIVERAVPTMYAQDGTVYLEMNNTDFGTTQNAAAAINRQFGAGTAMALDGRVIQVRGPLDPSMMPAFMSQVENLQVARAPATAKVIINARTGSVVMNRTVMIEEAAVAHGNLSVIINRQNQVFQPDTPFTEGQTVVVPNTQIEVRQDGGALQRVTTSANLADVVKALNALGATPQDLLAILQAMKTAGALRADLEII</sequence>
<name>FLGI_BORBR</name>
<feature type="signal peptide" evidence="1">
    <location>
        <begin position="1"/>
        <end position="22"/>
    </location>
</feature>
<feature type="chain" id="PRO_0000041784" description="Flagellar P-ring protein">
    <location>
        <begin position="23"/>
        <end position="368"/>
    </location>
</feature>
<gene>
    <name evidence="1" type="primary">flgI</name>
    <name type="ordered locus">BB2566</name>
</gene>
<comment type="function">
    <text evidence="1">Assembles around the rod to form the L-ring and probably protects the motor/basal body from shearing forces during rotation.</text>
</comment>
<comment type="subunit">
    <text evidence="1">The basal body constitutes a major portion of the flagellar organelle and consists of four rings (L,P,S, and M) mounted on a central rod.</text>
</comment>
<comment type="subcellular location">
    <subcellularLocation>
        <location evidence="1">Periplasm</location>
    </subcellularLocation>
    <subcellularLocation>
        <location evidence="1">Bacterial flagellum basal body</location>
    </subcellularLocation>
</comment>
<comment type="similarity">
    <text evidence="1">Belongs to the FlgI family.</text>
</comment>
<comment type="sequence caution" evidence="2">
    <conflict type="erroneous initiation">
        <sequence resource="EMBL-CDS" id="CAE33060"/>
    </conflict>
</comment>
<evidence type="ECO:0000255" key="1">
    <source>
        <dbReference type="HAMAP-Rule" id="MF_00416"/>
    </source>
</evidence>
<evidence type="ECO:0000305" key="2"/>
<organism>
    <name type="scientific">Bordetella bronchiseptica (strain ATCC BAA-588 / NCTC 13252 / RB50)</name>
    <name type="common">Alcaligenes bronchisepticus</name>
    <dbReference type="NCBI Taxonomy" id="257310"/>
    <lineage>
        <taxon>Bacteria</taxon>
        <taxon>Pseudomonadati</taxon>
        <taxon>Pseudomonadota</taxon>
        <taxon>Betaproteobacteria</taxon>
        <taxon>Burkholderiales</taxon>
        <taxon>Alcaligenaceae</taxon>
        <taxon>Bordetella</taxon>
    </lineage>
</organism>
<accession>Q7WJD1</accession>
<dbReference type="EMBL" id="BX640444">
    <property type="protein sequence ID" value="CAE33060.1"/>
    <property type="status" value="ALT_INIT"/>
    <property type="molecule type" value="Genomic_DNA"/>
</dbReference>
<dbReference type="SMR" id="Q7WJD1"/>
<dbReference type="KEGG" id="bbr:BB2566"/>
<dbReference type="eggNOG" id="COG1706">
    <property type="taxonomic scope" value="Bacteria"/>
</dbReference>
<dbReference type="HOGENOM" id="CLU_045235_1_0_4"/>
<dbReference type="Proteomes" id="UP000001027">
    <property type="component" value="Chromosome"/>
</dbReference>
<dbReference type="GO" id="GO:0009428">
    <property type="term" value="C:bacterial-type flagellum basal body, distal rod, P ring"/>
    <property type="evidence" value="ECO:0007669"/>
    <property type="project" value="InterPro"/>
</dbReference>
<dbReference type="GO" id="GO:0030288">
    <property type="term" value="C:outer membrane-bounded periplasmic space"/>
    <property type="evidence" value="ECO:0007669"/>
    <property type="project" value="InterPro"/>
</dbReference>
<dbReference type="GO" id="GO:0005198">
    <property type="term" value="F:structural molecule activity"/>
    <property type="evidence" value="ECO:0007669"/>
    <property type="project" value="InterPro"/>
</dbReference>
<dbReference type="GO" id="GO:0071973">
    <property type="term" value="P:bacterial-type flagellum-dependent cell motility"/>
    <property type="evidence" value="ECO:0007669"/>
    <property type="project" value="InterPro"/>
</dbReference>
<dbReference type="HAMAP" id="MF_00416">
    <property type="entry name" value="FlgI"/>
    <property type="match status" value="1"/>
</dbReference>
<dbReference type="InterPro" id="IPR001782">
    <property type="entry name" value="Flag_FlgI"/>
</dbReference>
<dbReference type="NCBIfam" id="NF003676">
    <property type="entry name" value="PRK05303.1"/>
    <property type="match status" value="1"/>
</dbReference>
<dbReference type="PANTHER" id="PTHR30381">
    <property type="entry name" value="FLAGELLAR P-RING PERIPLASMIC PROTEIN FLGI"/>
    <property type="match status" value="1"/>
</dbReference>
<dbReference type="PANTHER" id="PTHR30381:SF0">
    <property type="entry name" value="FLAGELLAR P-RING PROTEIN"/>
    <property type="match status" value="1"/>
</dbReference>
<dbReference type="Pfam" id="PF02119">
    <property type="entry name" value="FlgI"/>
    <property type="match status" value="1"/>
</dbReference>
<dbReference type="PRINTS" id="PR01010">
    <property type="entry name" value="FLGPRINGFLGI"/>
</dbReference>